<sequence>MSKQILVLPGDGIGPEIMAEAVKVLQLANEKYQLGFVLGYDELGGAAVDKYGVPLADETLERARRRCHPARRRRRSEMGRHRPGHPPGARPAENPFATGPVRQPAPGVLYPQLAEASTLRPEVVAGLDILIVRELTGGIYFGAPRESRLLANGERMAYDTLPYSESEIRRIAKVGFDMARVRGKKLCSVDKANVLASSQLWRAVVEEVAKDYPDVVLSHMYVDNAAMQLVRAPKQFDVIVTDNMFGDILSDEASMLTGSIGMLPSASLDADNKGMYEPCHGSRRPDIAGKGIANPLATILSVSMMLRYSFGQVEAANAIEQAVSKVLDQGLRTGDIWSEGCRKVGTAEMGDAVVAALATL</sequence>
<feature type="chain" id="PRO_0000083631" description="3-isopropylmalate dehydrogenase">
    <location>
        <begin position="1"/>
        <end position="360"/>
    </location>
</feature>
<feature type="region of interest" description="Disordered" evidence="2">
    <location>
        <begin position="66"/>
        <end position="101"/>
    </location>
</feature>
<feature type="compositionally biased region" description="Basic residues" evidence="2">
    <location>
        <begin position="66"/>
        <end position="75"/>
    </location>
</feature>
<feature type="binding site" evidence="1">
    <location>
        <position position="133"/>
    </location>
    <ligand>
        <name>substrate</name>
    </ligand>
</feature>
<feature type="binding site" evidence="1">
    <location>
        <position position="223"/>
    </location>
    <ligand>
        <name>Mg(2+)</name>
        <dbReference type="ChEBI" id="CHEBI:18420"/>
    </ligand>
</feature>
<feature type="binding site" evidence="1">
    <location>
        <position position="223"/>
    </location>
    <ligand>
        <name>substrate</name>
    </ligand>
</feature>
<feature type="binding site" evidence="1">
    <location>
        <position position="247"/>
    </location>
    <ligand>
        <name>Mg(2+)</name>
        <dbReference type="ChEBI" id="CHEBI:18420"/>
    </ligand>
</feature>
<feature type="binding site" evidence="1">
    <location>
        <position position="251"/>
    </location>
    <ligand>
        <name>Mg(2+)</name>
        <dbReference type="ChEBI" id="CHEBI:18420"/>
    </ligand>
</feature>
<feature type="site" description="Important for catalysis" evidence="1">
    <location>
        <position position="140"/>
    </location>
</feature>
<feature type="site" description="Important for catalysis" evidence="1">
    <location>
        <position position="191"/>
    </location>
</feature>
<name>LEU3_AZOVI</name>
<comment type="function">
    <text>Catalyzes the oxidation of 3-carboxy-2-hydroxy-4-methylpentanoate (3-isopropylmalate) to 3-carboxy-4-methyl-2-oxopentanoate. The product decarboxylates to 4-methyl-2 oxopentanoate.</text>
</comment>
<comment type="catalytic activity">
    <reaction>
        <text>(2R,3S)-3-isopropylmalate + NAD(+) = 4-methyl-2-oxopentanoate + CO2 + NADH</text>
        <dbReference type="Rhea" id="RHEA:32271"/>
        <dbReference type="ChEBI" id="CHEBI:16526"/>
        <dbReference type="ChEBI" id="CHEBI:17865"/>
        <dbReference type="ChEBI" id="CHEBI:35121"/>
        <dbReference type="ChEBI" id="CHEBI:57540"/>
        <dbReference type="ChEBI" id="CHEBI:57945"/>
        <dbReference type="EC" id="1.1.1.85"/>
    </reaction>
</comment>
<comment type="cofactor">
    <cofactor evidence="1">
        <name>Mg(2+)</name>
        <dbReference type="ChEBI" id="CHEBI:18420"/>
    </cofactor>
    <cofactor evidence="1">
        <name>Mn(2+)</name>
        <dbReference type="ChEBI" id="CHEBI:29035"/>
    </cofactor>
    <text evidence="1">Binds 1 Mg(2+) or Mn(2+) ion per subunit.</text>
</comment>
<comment type="pathway">
    <text>Amino-acid biosynthesis; L-leucine biosynthesis; L-leucine from 3-methyl-2-oxobutanoate: step 3/4.</text>
</comment>
<comment type="subunit">
    <text evidence="1">Homodimer.</text>
</comment>
<comment type="subcellular location">
    <subcellularLocation>
        <location>Cytoplasm</location>
    </subcellularLocation>
</comment>
<comment type="similarity">
    <text evidence="3">Belongs to the isocitrate and isopropylmalate dehydrogenases family. LeuB type 1 subfamily.</text>
</comment>
<evidence type="ECO:0000250" key="1"/>
<evidence type="ECO:0000256" key="2">
    <source>
        <dbReference type="SAM" id="MobiDB-lite"/>
    </source>
</evidence>
<evidence type="ECO:0000305" key="3"/>
<proteinExistence type="inferred from homology"/>
<reference key="1">
    <citation type="journal article" date="1997" name="Mol. Gen. Genet.">
        <title>Characterization and mutagenesis of the leucine biosynthetic genes of Azotobacter vinelandii: an analysis of the rarity of amino acid auxotrophs.</title>
        <authorList>
            <person name="Manna A.C."/>
            <person name="Das H.K."/>
        </authorList>
    </citation>
    <scope>NUCLEOTIDE SEQUENCE [GENOMIC DNA]</scope>
    <source>
        <strain>ATCC 13705 / OP1 / DSM 366 / NCIMB 11614 / LMG 3878 / UW</strain>
    </source>
</reference>
<accession>P96197</accession>
<protein>
    <recommendedName>
        <fullName>3-isopropylmalate dehydrogenase</fullName>
        <ecNumber>1.1.1.85</ecNumber>
    </recommendedName>
    <alternativeName>
        <fullName>3-IPM-DH</fullName>
    </alternativeName>
    <alternativeName>
        <fullName>Beta-IPM dehydrogenase</fullName>
        <shortName>IMDH</shortName>
    </alternativeName>
</protein>
<organism>
    <name type="scientific">Azotobacter vinelandii</name>
    <dbReference type="NCBI Taxonomy" id="354"/>
    <lineage>
        <taxon>Bacteria</taxon>
        <taxon>Pseudomonadati</taxon>
        <taxon>Pseudomonadota</taxon>
        <taxon>Gammaproteobacteria</taxon>
        <taxon>Pseudomonadales</taxon>
        <taxon>Pseudomonadaceae</taxon>
        <taxon>Azotobacter</taxon>
    </lineage>
</organism>
<gene>
    <name type="primary">leuB</name>
</gene>
<dbReference type="EC" id="1.1.1.85"/>
<dbReference type="EMBL" id="Y11280">
    <property type="protein sequence ID" value="CAA72151.1"/>
    <property type="molecule type" value="Genomic_DNA"/>
</dbReference>
<dbReference type="SMR" id="P96197"/>
<dbReference type="BRENDA" id="1.1.1.85">
    <property type="organism ID" value="49"/>
</dbReference>
<dbReference type="UniPathway" id="UPA00048">
    <property type="reaction ID" value="UER00072"/>
</dbReference>
<dbReference type="GO" id="GO:0005829">
    <property type="term" value="C:cytosol"/>
    <property type="evidence" value="ECO:0007669"/>
    <property type="project" value="TreeGrafter"/>
</dbReference>
<dbReference type="GO" id="GO:0003862">
    <property type="term" value="F:3-isopropylmalate dehydrogenase activity"/>
    <property type="evidence" value="ECO:0007669"/>
    <property type="project" value="UniProtKB-UniRule"/>
</dbReference>
<dbReference type="GO" id="GO:0000287">
    <property type="term" value="F:magnesium ion binding"/>
    <property type="evidence" value="ECO:0007669"/>
    <property type="project" value="InterPro"/>
</dbReference>
<dbReference type="GO" id="GO:0051287">
    <property type="term" value="F:NAD binding"/>
    <property type="evidence" value="ECO:0007669"/>
    <property type="project" value="InterPro"/>
</dbReference>
<dbReference type="GO" id="GO:0009098">
    <property type="term" value="P:L-leucine biosynthetic process"/>
    <property type="evidence" value="ECO:0007669"/>
    <property type="project" value="UniProtKB-UniRule"/>
</dbReference>
<dbReference type="FunFam" id="3.40.718.10:FF:000006">
    <property type="entry name" value="3-isopropylmalate dehydrogenase"/>
    <property type="match status" value="1"/>
</dbReference>
<dbReference type="Gene3D" id="3.40.718.10">
    <property type="entry name" value="Isopropylmalate Dehydrogenase"/>
    <property type="match status" value="2"/>
</dbReference>
<dbReference type="HAMAP" id="MF_01033">
    <property type="entry name" value="LeuB_type1"/>
    <property type="match status" value="1"/>
</dbReference>
<dbReference type="InterPro" id="IPR019818">
    <property type="entry name" value="IsoCit/isopropylmalate_DH_CS"/>
</dbReference>
<dbReference type="InterPro" id="IPR024084">
    <property type="entry name" value="IsoPropMal-DH-like_dom"/>
</dbReference>
<dbReference type="InterPro" id="IPR004429">
    <property type="entry name" value="Isopropylmalate_DH"/>
</dbReference>
<dbReference type="NCBIfam" id="TIGR00169">
    <property type="entry name" value="leuB"/>
    <property type="match status" value="1"/>
</dbReference>
<dbReference type="PANTHER" id="PTHR42979">
    <property type="entry name" value="3-ISOPROPYLMALATE DEHYDROGENASE"/>
    <property type="match status" value="1"/>
</dbReference>
<dbReference type="PANTHER" id="PTHR42979:SF1">
    <property type="entry name" value="3-ISOPROPYLMALATE DEHYDROGENASE"/>
    <property type="match status" value="1"/>
</dbReference>
<dbReference type="Pfam" id="PF00180">
    <property type="entry name" value="Iso_dh"/>
    <property type="match status" value="2"/>
</dbReference>
<dbReference type="SMART" id="SM01329">
    <property type="entry name" value="Iso_dh"/>
    <property type="match status" value="1"/>
</dbReference>
<dbReference type="SUPFAM" id="SSF53659">
    <property type="entry name" value="Isocitrate/Isopropylmalate dehydrogenase-like"/>
    <property type="match status" value="1"/>
</dbReference>
<dbReference type="PROSITE" id="PS00470">
    <property type="entry name" value="IDH_IMDH"/>
    <property type="match status" value="1"/>
</dbReference>
<keyword id="KW-0028">Amino-acid biosynthesis</keyword>
<keyword id="KW-0100">Branched-chain amino acid biosynthesis</keyword>
<keyword id="KW-0963">Cytoplasm</keyword>
<keyword id="KW-0432">Leucine biosynthesis</keyword>
<keyword id="KW-0460">Magnesium</keyword>
<keyword id="KW-0464">Manganese</keyword>
<keyword id="KW-0479">Metal-binding</keyword>
<keyword id="KW-0520">NAD</keyword>
<keyword id="KW-0560">Oxidoreductase</keyword>